<keyword id="KW-0256">Endoplasmic reticulum</keyword>
<keyword id="KW-0445">Lipid transport</keyword>
<keyword id="KW-0446">Lipid-binding</keyword>
<keyword id="KW-0472">Membrane</keyword>
<keyword id="KW-0496">Mitochondrion</keyword>
<keyword id="KW-1000">Mitochondrion outer membrane</keyword>
<keyword id="KW-1185">Reference proteome</keyword>
<keyword id="KW-0813">Transport</keyword>
<proteinExistence type="inferred from homology"/>
<reference key="1">
    <citation type="journal article" date="2013" name="G3 (Bethesda)">
        <title>Comparative genomics of a plant-pathogenic fungus, Pyrenophora tritici-repentis, reveals transduplication and the impact of repeat elements on pathogenicity and population divergence.</title>
        <authorList>
            <person name="Manning V.A."/>
            <person name="Pandelova I."/>
            <person name="Dhillon B."/>
            <person name="Wilhelm L.J."/>
            <person name="Goodwin S.B."/>
            <person name="Berlin A.M."/>
            <person name="Figueroa M."/>
            <person name="Freitag M."/>
            <person name="Hane J.K."/>
            <person name="Henrissat B."/>
            <person name="Holman W.H."/>
            <person name="Kodira C.D."/>
            <person name="Martin J."/>
            <person name="Oliver R.P."/>
            <person name="Robbertse B."/>
            <person name="Schackwitz W."/>
            <person name="Schwartz D.C."/>
            <person name="Spatafora J.W."/>
            <person name="Turgeon B.G."/>
            <person name="Yandava C."/>
            <person name="Young S."/>
            <person name="Zhou S."/>
            <person name="Zeng Q."/>
            <person name="Grigoriev I.V."/>
            <person name="Ma L.-J."/>
            <person name="Ciuffetti L.M."/>
        </authorList>
    </citation>
    <scope>NUCLEOTIDE SEQUENCE [LARGE SCALE GENOMIC DNA]</scope>
    <source>
        <strain>Pt-1C-BFP</strain>
    </source>
</reference>
<feature type="chain" id="PRO_0000384308" description="Mitochondrial distribution and morphology protein 12">
    <location>
        <begin position="1"/>
        <end position="439"/>
    </location>
</feature>
<feature type="domain" description="SMP-LTD" evidence="1">
    <location>
        <begin position="1"/>
        <end position="439"/>
    </location>
</feature>
<feature type="region of interest" description="Disordered" evidence="2">
    <location>
        <begin position="65"/>
        <end position="165"/>
    </location>
</feature>
<feature type="region of interest" description="Disordered" evidence="2">
    <location>
        <begin position="229"/>
        <end position="284"/>
    </location>
</feature>
<feature type="compositionally biased region" description="Acidic residues" evidence="2">
    <location>
        <begin position="69"/>
        <end position="90"/>
    </location>
</feature>
<feature type="compositionally biased region" description="Basic and acidic residues" evidence="2">
    <location>
        <begin position="109"/>
        <end position="121"/>
    </location>
</feature>
<feature type="compositionally biased region" description="Polar residues" evidence="2">
    <location>
        <begin position="229"/>
        <end position="243"/>
    </location>
</feature>
<evidence type="ECO:0000255" key="1">
    <source>
        <dbReference type="HAMAP-Rule" id="MF_03104"/>
    </source>
</evidence>
<evidence type="ECO:0000256" key="2">
    <source>
        <dbReference type="SAM" id="MobiDB-lite"/>
    </source>
</evidence>
<dbReference type="EMBL" id="DS231618">
    <property type="protein sequence ID" value="EDU47650.1"/>
    <property type="molecule type" value="Genomic_DNA"/>
</dbReference>
<dbReference type="RefSeq" id="XP_001935076.1">
    <property type="nucleotide sequence ID" value="XM_001935041.1"/>
</dbReference>
<dbReference type="SMR" id="B2W543"/>
<dbReference type="FunCoup" id="B2W543">
    <property type="interactions" value="41"/>
</dbReference>
<dbReference type="STRING" id="426418.B2W543"/>
<dbReference type="EnsemblFungi" id="EDU47650">
    <property type="protein sequence ID" value="EDU47650"/>
    <property type="gene ID" value="PTRG_04743"/>
</dbReference>
<dbReference type="eggNOG" id="ENOG502S3PB">
    <property type="taxonomic scope" value="Eukaryota"/>
</dbReference>
<dbReference type="HOGENOM" id="CLU_026794_0_0_1"/>
<dbReference type="InParanoid" id="B2W543"/>
<dbReference type="OMA" id="KRAHFCF"/>
<dbReference type="OrthoDB" id="25938at28556"/>
<dbReference type="Proteomes" id="UP000001471">
    <property type="component" value="Unassembled WGS sequence"/>
</dbReference>
<dbReference type="GO" id="GO:0005789">
    <property type="term" value="C:endoplasmic reticulum membrane"/>
    <property type="evidence" value="ECO:0007669"/>
    <property type="project" value="UniProtKB-SubCell"/>
</dbReference>
<dbReference type="GO" id="GO:0032865">
    <property type="term" value="C:ERMES complex"/>
    <property type="evidence" value="ECO:0007669"/>
    <property type="project" value="UniProtKB-UniRule"/>
</dbReference>
<dbReference type="GO" id="GO:0008289">
    <property type="term" value="F:lipid binding"/>
    <property type="evidence" value="ECO:0007669"/>
    <property type="project" value="UniProtKB-KW"/>
</dbReference>
<dbReference type="GO" id="GO:0000002">
    <property type="term" value="P:mitochondrial genome maintenance"/>
    <property type="evidence" value="ECO:0007669"/>
    <property type="project" value="UniProtKB-UniRule"/>
</dbReference>
<dbReference type="GO" id="GO:1990456">
    <property type="term" value="P:mitochondrion-endoplasmic reticulum membrane tethering"/>
    <property type="evidence" value="ECO:0007669"/>
    <property type="project" value="TreeGrafter"/>
</dbReference>
<dbReference type="GO" id="GO:0015914">
    <property type="term" value="P:phospholipid transport"/>
    <property type="evidence" value="ECO:0007669"/>
    <property type="project" value="TreeGrafter"/>
</dbReference>
<dbReference type="GO" id="GO:0045040">
    <property type="term" value="P:protein insertion into mitochondrial outer membrane"/>
    <property type="evidence" value="ECO:0007669"/>
    <property type="project" value="UniProtKB-UniRule"/>
</dbReference>
<dbReference type="CDD" id="cd21672">
    <property type="entry name" value="SMP_Mdm12"/>
    <property type="match status" value="1"/>
</dbReference>
<dbReference type="HAMAP" id="MF_03104">
    <property type="entry name" value="Mdm12"/>
    <property type="match status" value="1"/>
</dbReference>
<dbReference type="InterPro" id="IPR027532">
    <property type="entry name" value="Mdm12"/>
</dbReference>
<dbReference type="InterPro" id="IPR031468">
    <property type="entry name" value="SMP_LBD"/>
</dbReference>
<dbReference type="PANTHER" id="PTHR28204">
    <property type="entry name" value="MITOCHONDRIAL DISTRIBUTION AND MORPHOLOGY PROTEIN 12"/>
    <property type="match status" value="1"/>
</dbReference>
<dbReference type="PANTHER" id="PTHR28204:SF1">
    <property type="entry name" value="MITOCHONDRIAL DISTRIBUTION AND MORPHOLOGY PROTEIN 12"/>
    <property type="match status" value="1"/>
</dbReference>
<dbReference type="PROSITE" id="PS51847">
    <property type="entry name" value="SMP"/>
    <property type="match status" value="1"/>
</dbReference>
<organism>
    <name type="scientific">Pyrenophora tritici-repentis (strain Pt-1C-BFP)</name>
    <name type="common">Wheat tan spot fungus</name>
    <name type="synonym">Drechslera tritici-repentis</name>
    <dbReference type="NCBI Taxonomy" id="426418"/>
    <lineage>
        <taxon>Eukaryota</taxon>
        <taxon>Fungi</taxon>
        <taxon>Dikarya</taxon>
        <taxon>Ascomycota</taxon>
        <taxon>Pezizomycotina</taxon>
        <taxon>Dothideomycetes</taxon>
        <taxon>Pleosporomycetidae</taxon>
        <taxon>Pleosporales</taxon>
        <taxon>Pleosporineae</taxon>
        <taxon>Pleosporaceae</taxon>
        <taxon>Pyrenophora</taxon>
    </lineage>
</organism>
<protein>
    <recommendedName>
        <fullName evidence="1">Mitochondrial distribution and morphology protein 12</fullName>
    </recommendedName>
    <alternativeName>
        <fullName evidence="1">Mitochondrial inheritance component mdm12</fullName>
    </alternativeName>
</protein>
<gene>
    <name evidence="1" type="primary">mdm12</name>
    <name type="ORF">PTRG_04743</name>
</gene>
<comment type="function">
    <text evidence="1">Component of the ERMES/MDM complex, which serves as a molecular tether to connect the endoplasmic reticulum (ER) and mitochondria. Components of this complex are involved in the control of mitochondrial shape and protein biogenesis, and function in nonvesicular lipid trafficking between the ER and mitochondria. mdm12 is required for the interaction of the ER-resident membrane protein MMM1 and the outer mitochondrial membrane-resident beta-barrel protein MDM10. The mdm12-MMM1 subcomplex functions in the major beta-barrel assembly pathway that is responsible for biogenesis of all mitochondrial outer membrane beta-barrel proteins, and acts in a late step after the SAM complex. The MDM10-mdm12-MMM1 subcomplex further acts in the TOM40-specific pathway after the action of the mdm12-MMM1 complex. Essential for establishing and maintaining the structure of mitochondria and maintenance of mtDNA nucleoids.</text>
</comment>
<comment type="subunit">
    <text evidence="1">Component of the ER-mitochondria encounter structure (ERMES) or MDM complex, composed of MMM1, MDM10, mdm12 and MDM34. A MMM1 homodimer associates with one molecule of mdm12 on each side in a pairwise head-to-tail manner, and the SMP-LTD domains of MMM1 and mdm12 generate a continuous hydrophobic tunnel for phospholipid trafficking.</text>
</comment>
<comment type="subcellular location">
    <subcellularLocation>
        <location evidence="1">Mitochondrion outer membrane</location>
        <topology evidence="1">Peripheral membrane protein</topology>
        <orientation evidence="1">Cytoplasmic side</orientation>
    </subcellularLocation>
    <subcellularLocation>
        <location evidence="1">Endoplasmic reticulum membrane</location>
        <topology evidence="1">Peripheral membrane protein</topology>
        <orientation evidence="1">Cytoplasmic side</orientation>
    </subcellularLocation>
    <text evidence="1">The ERMES/MDM complex localizes to a few discrete foci (around 10 per single cell), that represent mitochondria-endoplasmic reticulum junctions. These foci are often found next to mtDNA nucleoids.</text>
</comment>
<comment type="domain">
    <text evidence="1">The SMP-LTD domain is a barrel-like domain that can bind various types of glycerophospholipids in its interior and mediate their transfer between two adjacent bilayers.</text>
</comment>
<comment type="similarity">
    <text evidence="1">Belongs to the MDM12 family.</text>
</comment>
<sequence length="439" mass="47962">MSIDINWDTITGGTEGSARAEKIRAFIHDRFQQITLPRFIRSVHVHSFDFGSVPPEIEIKDICDPLPDFYEDDEDYPDEEGDEAENEAEDATPGAGDKLRDSSNPSNRPSRDSQSRERGRGAEGPVGRSIDHNQLRPSQPPARPSTKRSSLAPNELGSPFFPGALTPGIPGGTSNMNYFHLPLSAGLSGAATPLAAVAGAQLHSWLDNPHRPSTPTNMRLRHAASVNSLTLTPQSHPDPTSRPSSRHQHDEGKRQSFAGSDDGASPHGYTRTPSASPHRMHEKSPEDIQVVTHVQYSGNIKMSLTAEILLDYPMPSFVGIPLKLNITGLTFDGVAILAYIKKRAHFCFLSPDDADALVGSDIGFNGLQTDAQGQNPRPVQRPKIGGLLEHIKVESEIGGQGSGKQVLKNVGKVESFVLEQVRRIFEDEFVYPSFWTFLV</sequence>
<accession>B2W543</accession>
<name>MDM12_PYRTR</name>